<sequence>MNSSVLLGEGFTLMFLGMGFVLAFLFLLIFAIRGMSAAVNRFFPEPVPVPKAAPAAAPADDFARLKPVIAAAIHHHRRLNP</sequence>
<accession>P58650</accession>
<evidence type="ECO:0000250" key="1"/>
<evidence type="ECO:0000305" key="2"/>
<feature type="chain" id="PRO_0000216459" description="Oxaloacetate decarboxylase gamma chain 3">
    <location>
        <begin position="1"/>
        <end position="81"/>
    </location>
</feature>
<feature type="transmembrane region" description="Helical" evidence="1">
    <location>
        <begin position="12"/>
        <end position="32"/>
    </location>
</feature>
<gene>
    <name type="primary">oadG3</name>
    <name type="synonym">dcoC</name>
    <name type="ordered locus">STM0766</name>
</gene>
<comment type="function">
    <text evidence="1">Catalyzes the decarboxylation of oxaloacetate coupled to Na(+) translocation.</text>
</comment>
<comment type="catalytic activity">
    <reaction>
        <text>oxaloacetate + 2 Na(+)(in) + H(+) = pyruvate + 2 Na(+)(out) + CO2</text>
        <dbReference type="Rhea" id="RHEA:57724"/>
        <dbReference type="ChEBI" id="CHEBI:15361"/>
        <dbReference type="ChEBI" id="CHEBI:15378"/>
        <dbReference type="ChEBI" id="CHEBI:16452"/>
        <dbReference type="ChEBI" id="CHEBI:16526"/>
        <dbReference type="ChEBI" id="CHEBI:29101"/>
        <dbReference type="EC" id="7.2.4.2"/>
    </reaction>
</comment>
<comment type="cofactor">
    <cofactor evidence="1">
        <name>Na(+)</name>
        <dbReference type="ChEBI" id="CHEBI:29101"/>
    </cofactor>
</comment>
<comment type="subunit">
    <text evidence="1">Heterotrimer of an alpha, a beta and a gamma subunit.</text>
</comment>
<comment type="subcellular location">
    <subcellularLocation>
        <location evidence="1">Cell membrane</location>
        <topology evidence="1">Single-pass membrane protein</topology>
    </subcellularLocation>
</comment>
<comment type="similarity">
    <text evidence="2">Belongs to the OadG family.</text>
</comment>
<keyword id="KW-1003">Cell membrane</keyword>
<keyword id="KW-0406">Ion transport</keyword>
<keyword id="KW-0472">Membrane</keyword>
<keyword id="KW-1185">Reference proteome</keyword>
<keyword id="KW-0915">Sodium</keyword>
<keyword id="KW-0739">Sodium transport</keyword>
<keyword id="KW-1278">Translocase</keyword>
<keyword id="KW-0812">Transmembrane</keyword>
<keyword id="KW-1133">Transmembrane helix</keyword>
<keyword id="KW-0813">Transport</keyword>
<reference key="1">
    <citation type="journal article" date="2001" name="Nature">
        <title>Complete genome sequence of Salmonella enterica serovar Typhimurium LT2.</title>
        <authorList>
            <person name="McClelland M."/>
            <person name="Sanderson K.E."/>
            <person name="Spieth J."/>
            <person name="Clifton S.W."/>
            <person name="Latreille P."/>
            <person name="Courtney L."/>
            <person name="Porwollik S."/>
            <person name="Ali J."/>
            <person name="Dante M."/>
            <person name="Du F."/>
            <person name="Hou S."/>
            <person name="Layman D."/>
            <person name="Leonard S."/>
            <person name="Nguyen C."/>
            <person name="Scott K."/>
            <person name="Holmes A."/>
            <person name="Grewal N."/>
            <person name="Mulvaney E."/>
            <person name="Ryan E."/>
            <person name="Sun H."/>
            <person name="Florea L."/>
            <person name="Miller W."/>
            <person name="Stoneking T."/>
            <person name="Nhan M."/>
            <person name="Waterston R."/>
            <person name="Wilson R.K."/>
        </authorList>
    </citation>
    <scope>NUCLEOTIDE SEQUENCE [LARGE SCALE GENOMIC DNA]</scope>
    <source>
        <strain>LT2 / SGSC1412 / ATCC 700720</strain>
    </source>
</reference>
<organism>
    <name type="scientific">Salmonella typhimurium (strain LT2 / SGSC1412 / ATCC 700720)</name>
    <dbReference type="NCBI Taxonomy" id="99287"/>
    <lineage>
        <taxon>Bacteria</taxon>
        <taxon>Pseudomonadati</taxon>
        <taxon>Pseudomonadota</taxon>
        <taxon>Gammaproteobacteria</taxon>
        <taxon>Enterobacterales</taxon>
        <taxon>Enterobacteriaceae</taxon>
        <taxon>Salmonella</taxon>
    </lineage>
</organism>
<dbReference type="EC" id="7.2.4.2"/>
<dbReference type="EMBL" id="AE006468">
    <property type="protein sequence ID" value="AAL19705.1"/>
    <property type="molecule type" value="Genomic_DNA"/>
</dbReference>
<dbReference type="RefSeq" id="NP_459746.1">
    <property type="nucleotide sequence ID" value="NC_003197.2"/>
</dbReference>
<dbReference type="RefSeq" id="WP_001089088.1">
    <property type="nucleotide sequence ID" value="NC_003197.2"/>
</dbReference>
<dbReference type="SMR" id="P58650"/>
<dbReference type="STRING" id="99287.STM0766"/>
<dbReference type="PaxDb" id="99287-STM0766"/>
<dbReference type="GeneID" id="1252286"/>
<dbReference type="KEGG" id="stm:STM0766"/>
<dbReference type="PATRIC" id="fig|99287.12.peg.798"/>
<dbReference type="HOGENOM" id="CLU_168750_3_2_6"/>
<dbReference type="OMA" id="LMFTGMG"/>
<dbReference type="PhylomeDB" id="P58650"/>
<dbReference type="BioCyc" id="SENT99287:STM0766-MONOMER"/>
<dbReference type="Proteomes" id="UP000001014">
    <property type="component" value="Chromosome"/>
</dbReference>
<dbReference type="GO" id="GO:0005886">
    <property type="term" value="C:plasma membrane"/>
    <property type="evidence" value="ECO:0007669"/>
    <property type="project" value="UniProtKB-SubCell"/>
</dbReference>
<dbReference type="GO" id="GO:0015451">
    <property type="term" value="F:decarboxylation-driven active transmembrane transporter activity"/>
    <property type="evidence" value="ECO:0007669"/>
    <property type="project" value="UniProtKB-EC"/>
</dbReference>
<dbReference type="GO" id="GO:0008948">
    <property type="term" value="F:oxaloacetate decarboxylase activity"/>
    <property type="evidence" value="ECO:0007669"/>
    <property type="project" value="UniProtKB-UniRule"/>
</dbReference>
<dbReference type="GO" id="GO:0015081">
    <property type="term" value="F:sodium ion transmembrane transporter activity"/>
    <property type="evidence" value="ECO:0007669"/>
    <property type="project" value="UniProtKB-UniRule"/>
</dbReference>
<dbReference type="GO" id="GO:0036376">
    <property type="term" value="P:sodium ion export across plasma membrane"/>
    <property type="evidence" value="ECO:0007669"/>
    <property type="project" value="InterPro"/>
</dbReference>
<dbReference type="HAMAP" id="MF_00404">
    <property type="entry name" value="OadG"/>
    <property type="match status" value="1"/>
</dbReference>
<dbReference type="InterPro" id="IPR005899">
    <property type="entry name" value="Na_pump_deCOase"/>
</dbReference>
<dbReference type="InterPro" id="IPR023424">
    <property type="entry name" value="OadG"/>
</dbReference>
<dbReference type="NCBIfam" id="TIGR01195">
    <property type="entry name" value="oadG_fam"/>
    <property type="match status" value="1"/>
</dbReference>
<dbReference type="NCBIfam" id="NF002792">
    <property type="entry name" value="PRK02919.1"/>
    <property type="match status" value="1"/>
</dbReference>
<dbReference type="Pfam" id="PF04277">
    <property type="entry name" value="OAD_gamma"/>
    <property type="match status" value="1"/>
</dbReference>
<proteinExistence type="inferred from homology"/>
<name>OADG3_SALTY</name>
<protein>
    <recommendedName>
        <fullName>Oxaloacetate decarboxylase gamma chain 3</fullName>
        <ecNumber>7.2.4.2</ecNumber>
    </recommendedName>
</protein>